<sequence length="657" mass="74440">MRFDNASIVVYYCLIQMNIINLGILAHIDAGKTSVTENLLFASGATEKCGRVDNGDTITDSMDIEKRRGITVRASTTSIIWNGVKCNIIDTPGHMDFIAEVERTFKMLDGAVLILSAKEGIQAQTKLLFNTLQKLQIPTIIFINKIDRDGVNLERLYLDIKTNLSQDVLFMQTVVDGLVYPICSQTYIKEEYKEFVCNHDDNILERYLADSEISPADYWNTIIDLVAKAKVYPVLHGSAMFNIGINELLDAISSFILPPESVSNRLSAYLYKIEHDPKGHKRSFLKIIDGSLRLRDIVRINDSEKFIKIKNLKTIYQGREINVDEVGANDIAIVEDMEDFRIGDYLGTKPCLIQGLSHQHPALKSSVRPDRSEERSKVISALNTLWIEDPSLSFSINSYSDELEISLYGLTQKEIIQTLLEERFSVKVHFDEIKTIYKERPVKKVNKIIQIEVPPNPYWATIGLTLEPLPLGTGLQIESDISYGYLNHSFQNAVFEGIRMSCQSGLHGWEVTDLKVTFTQAEYYSPVSTPADFRQLTPYVFRLALQQSGVDILEPMLYFELQIPQAASSKAITDLQKMMSEIEDISCNNEWCHIKGKVPLNTSKDYASEVSSYTKGLGVFMVKPCGYQITKGDYSDNIRMNEKDKLLFMFQKSMSSK</sequence>
<dbReference type="EMBL" id="Z21523">
    <property type="protein sequence ID" value="CAA79728.1"/>
    <property type="status" value="ALT_INIT"/>
    <property type="molecule type" value="Genomic_DNA"/>
</dbReference>
<dbReference type="EMBL" id="Z21523">
    <property type="protein sequence ID" value="CAA79727.1"/>
    <property type="molecule type" value="Genomic_DNA"/>
</dbReference>
<dbReference type="PIR" id="I40188">
    <property type="entry name" value="I40188"/>
</dbReference>
<dbReference type="SMR" id="Q08425"/>
<dbReference type="CARD" id="ARO:3000191">
    <property type="molecule name" value="tet(Q)"/>
    <property type="mechanism identifier" value="ARO:0001003"/>
    <property type="mechanism name" value="antibiotic target protection"/>
</dbReference>
<dbReference type="GO" id="GO:0005525">
    <property type="term" value="F:GTP binding"/>
    <property type="evidence" value="ECO:0007669"/>
    <property type="project" value="UniProtKB-KW"/>
</dbReference>
<dbReference type="GO" id="GO:0003924">
    <property type="term" value="F:GTPase activity"/>
    <property type="evidence" value="ECO:0007669"/>
    <property type="project" value="InterPro"/>
</dbReference>
<dbReference type="GO" id="GO:0046677">
    <property type="term" value="P:response to antibiotic"/>
    <property type="evidence" value="ECO:0007669"/>
    <property type="project" value="UniProtKB-KW"/>
</dbReference>
<dbReference type="GO" id="GO:0032790">
    <property type="term" value="P:ribosome disassembly"/>
    <property type="evidence" value="ECO:0007669"/>
    <property type="project" value="TreeGrafter"/>
</dbReference>
<dbReference type="GO" id="GO:0006412">
    <property type="term" value="P:translation"/>
    <property type="evidence" value="ECO:0007669"/>
    <property type="project" value="UniProtKB-KW"/>
</dbReference>
<dbReference type="CDD" id="cd03711">
    <property type="entry name" value="Tet_C"/>
    <property type="match status" value="1"/>
</dbReference>
<dbReference type="CDD" id="cd03690">
    <property type="entry name" value="Tet_II"/>
    <property type="match status" value="1"/>
</dbReference>
<dbReference type="CDD" id="cd16258">
    <property type="entry name" value="Tet_III"/>
    <property type="match status" value="1"/>
</dbReference>
<dbReference type="CDD" id="cd01684">
    <property type="entry name" value="Tet_like_IV"/>
    <property type="match status" value="1"/>
</dbReference>
<dbReference type="CDD" id="cd04168">
    <property type="entry name" value="TetM_like"/>
    <property type="match status" value="1"/>
</dbReference>
<dbReference type="Gene3D" id="3.30.230.10">
    <property type="match status" value="1"/>
</dbReference>
<dbReference type="Gene3D" id="3.30.70.240">
    <property type="match status" value="1"/>
</dbReference>
<dbReference type="Gene3D" id="3.30.70.870">
    <property type="entry name" value="Elongation Factor G (Translational Gtpase), domain 3"/>
    <property type="match status" value="1"/>
</dbReference>
<dbReference type="Gene3D" id="3.40.50.300">
    <property type="entry name" value="P-loop containing nucleotide triphosphate hydrolases"/>
    <property type="match status" value="1"/>
</dbReference>
<dbReference type="Gene3D" id="2.40.30.10">
    <property type="entry name" value="Translation factors"/>
    <property type="match status" value="1"/>
</dbReference>
<dbReference type="InterPro" id="IPR041095">
    <property type="entry name" value="EFG_II"/>
</dbReference>
<dbReference type="InterPro" id="IPR035647">
    <property type="entry name" value="EFG_III/V"/>
</dbReference>
<dbReference type="InterPro" id="IPR000640">
    <property type="entry name" value="EFG_V-like"/>
</dbReference>
<dbReference type="InterPro" id="IPR031157">
    <property type="entry name" value="G_TR_CS"/>
</dbReference>
<dbReference type="InterPro" id="IPR027417">
    <property type="entry name" value="P-loop_NTPase"/>
</dbReference>
<dbReference type="InterPro" id="IPR020568">
    <property type="entry name" value="Ribosomal_Su5_D2-typ_SF"/>
</dbReference>
<dbReference type="InterPro" id="IPR014721">
    <property type="entry name" value="Ribsml_uS5_D2-typ_fold_subgr"/>
</dbReference>
<dbReference type="InterPro" id="IPR005225">
    <property type="entry name" value="Small_GTP-bd"/>
</dbReference>
<dbReference type="InterPro" id="IPR000795">
    <property type="entry name" value="T_Tr_GTP-bd_dom"/>
</dbReference>
<dbReference type="InterPro" id="IPR035650">
    <property type="entry name" value="Tet_C"/>
</dbReference>
<dbReference type="InterPro" id="IPR009000">
    <property type="entry name" value="Transl_B-barrel_sf"/>
</dbReference>
<dbReference type="InterPro" id="IPR005517">
    <property type="entry name" value="Transl_elong_EFG/EF2_IV"/>
</dbReference>
<dbReference type="NCBIfam" id="TIGR00231">
    <property type="entry name" value="small_GTP"/>
    <property type="match status" value="1"/>
</dbReference>
<dbReference type="NCBIfam" id="NF012153">
    <property type="entry name" value="tet_protect"/>
    <property type="match status" value="1"/>
</dbReference>
<dbReference type="NCBIfam" id="NF012154">
    <property type="entry name" value="tet_protect_Q"/>
    <property type="match status" value="1"/>
</dbReference>
<dbReference type="PANTHER" id="PTHR43261:SF1">
    <property type="entry name" value="RIBOSOME-RELEASING FACTOR 2, MITOCHONDRIAL"/>
    <property type="match status" value="1"/>
</dbReference>
<dbReference type="PANTHER" id="PTHR43261">
    <property type="entry name" value="TRANSLATION ELONGATION FACTOR G-RELATED"/>
    <property type="match status" value="1"/>
</dbReference>
<dbReference type="Pfam" id="PF00679">
    <property type="entry name" value="EFG_C"/>
    <property type="match status" value="1"/>
</dbReference>
<dbReference type="Pfam" id="PF14492">
    <property type="entry name" value="EFG_III"/>
    <property type="match status" value="1"/>
</dbReference>
<dbReference type="Pfam" id="PF03764">
    <property type="entry name" value="EFG_IV"/>
    <property type="match status" value="1"/>
</dbReference>
<dbReference type="Pfam" id="PF00009">
    <property type="entry name" value="GTP_EFTU"/>
    <property type="match status" value="1"/>
</dbReference>
<dbReference type="PRINTS" id="PR00315">
    <property type="entry name" value="ELONGATNFCT"/>
</dbReference>
<dbReference type="PRINTS" id="PR01037">
    <property type="entry name" value="TCRTETOQM"/>
</dbReference>
<dbReference type="SMART" id="SM00838">
    <property type="entry name" value="EFG_C"/>
    <property type="match status" value="1"/>
</dbReference>
<dbReference type="SMART" id="SM00889">
    <property type="entry name" value="EFG_IV"/>
    <property type="match status" value="1"/>
</dbReference>
<dbReference type="SUPFAM" id="SSF54980">
    <property type="entry name" value="EF-G C-terminal domain-like"/>
    <property type="match status" value="2"/>
</dbReference>
<dbReference type="SUPFAM" id="SSF52540">
    <property type="entry name" value="P-loop containing nucleoside triphosphate hydrolases"/>
    <property type="match status" value="1"/>
</dbReference>
<dbReference type="SUPFAM" id="SSF54211">
    <property type="entry name" value="Ribosomal protein S5 domain 2-like"/>
    <property type="match status" value="1"/>
</dbReference>
<dbReference type="SUPFAM" id="SSF50447">
    <property type="entry name" value="Translation proteins"/>
    <property type="match status" value="1"/>
</dbReference>
<dbReference type="PROSITE" id="PS00301">
    <property type="entry name" value="G_TR_1"/>
    <property type="match status" value="1"/>
</dbReference>
<dbReference type="PROSITE" id="PS51722">
    <property type="entry name" value="G_TR_2"/>
    <property type="match status" value="1"/>
</dbReference>
<gene>
    <name type="primary">tetQ</name>
    <name type="synonym">tet(Q)</name>
</gene>
<proteinExistence type="inferred from homology"/>
<accession>Q08425</accession>
<protein>
    <recommendedName>
        <fullName>Tetracycline resistance protein TetQ</fullName>
    </recommendedName>
    <alternativeName>
        <fullName evidence="4">TetA(Q)2</fullName>
    </alternativeName>
</protein>
<comment type="function">
    <text evidence="3 6">Abolishes the inhibitory effect of tetracycline on protein synthesis by non-covalently modifying ribosomes (Probable) (PubMed:7916585). Confers mild resistance to tetracycline when expressed in E.coli (PubMed:7916585).</text>
</comment>
<comment type="similarity">
    <text evidence="2">Belongs to the TRAFAC class translation factor GTPase superfamily. Classic translation factor GTPase family. TetM/TetO subfamily.</text>
</comment>
<comment type="caution">
    <text evidence="6">It is uncertain whether Met-1 or Met-17 is the initiator; the predicted GTG start codon (yielding the 657 residue protein shown here) is preceded by a better ribosome-binding site (PubMed:7916585).</text>
</comment>
<comment type="sequence caution" evidence="5">
    <conflict type="erroneous initiation">
        <sequence resource="EMBL-CDS" id="CAA79728"/>
    </conflict>
    <text>Truncated N-terminus.</text>
</comment>
<organism>
    <name type="scientific">Bacteroides fragilis</name>
    <dbReference type="NCBI Taxonomy" id="817"/>
    <lineage>
        <taxon>Bacteria</taxon>
        <taxon>Pseudomonadati</taxon>
        <taxon>Bacteroidota</taxon>
        <taxon>Bacteroidia</taxon>
        <taxon>Bacteroidales</taxon>
        <taxon>Bacteroidaceae</taxon>
        <taxon>Bacteroides</taxon>
    </lineage>
</organism>
<keyword id="KW-0046">Antibiotic resistance</keyword>
<keyword id="KW-0342">GTP-binding</keyword>
<keyword id="KW-0547">Nucleotide-binding</keyword>
<keyword id="KW-0648">Protein biosynthesis</keyword>
<evidence type="ECO:0000250" key="1"/>
<evidence type="ECO:0000255" key="2">
    <source>
        <dbReference type="PROSITE-ProRule" id="PRU01059"/>
    </source>
</evidence>
<evidence type="ECO:0000269" key="3">
    <source>
    </source>
</evidence>
<evidence type="ECO:0000303" key="4">
    <source>
    </source>
</evidence>
<evidence type="ECO:0000305" key="5"/>
<evidence type="ECO:0000305" key="6">
    <source>
    </source>
</evidence>
<name>TETQ_BACFG</name>
<feature type="chain" id="PRO_0000091510" description="Tetracycline resistance protein TetQ">
    <location>
        <begin position="1"/>
        <end position="657"/>
    </location>
</feature>
<feature type="domain" description="tr-type G" evidence="2">
    <location>
        <begin position="17"/>
        <end position="260"/>
    </location>
</feature>
<feature type="binding site" evidence="1">
    <location>
        <begin position="26"/>
        <end position="33"/>
    </location>
    <ligand>
        <name>GTP</name>
        <dbReference type="ChEBI" id="CHEBI:37565"/>
    </ligand>
</feature>
<feature type="binding site" evidence="1">
    <location>
        <begin position="90"/>
        <end position="94"/>
    </location>
    <ligand>
        <name>GTP</name>
        <dbReference type="ChEBI" id="CHEBI:37565"/>
    </ligand>
</feature>
<feature type="binding site" evidence="1">
    <location>
        <begin position="144"/>
        <end position="147"/>
    </location>
    <ligand>
        <name>GTP</name>
        <dbReference type="ChEBI" id="CHEBI:37565"/>
    </ligand>
</feature>
<reference key="1">
    <citation type="journal article" date="1993" name="Antimicrob. Agents Chemother.">
        <title>Sequencing of a tet(Q) gene isolated from Bacteroides fragilis 1126.</title>
        <authorList>
            <person name="Lepine G."/>
            <person name="Lacroix J.-M."/>
            <person name="Walker C.B."/>
            <person name="Progulske-Fox A."/>
        </authorList>
    </citation>
    <scope>NUCLEOTIDE SEQUENCE [GENOMIC DNA]</scope>
    <scope>FUNCTION</scope>
    <source>
        <strain>1126</strain>
    </source>
</reference>